<name>HEM1_BACCZ</name>
<gene>
    <name evidence="1" type="primary">hemA</name>
    <name type="ordered locus">BCE33L4210</name>
</gene>
<keyword id="KW-0521">NADP</keyword>
<keyword id="KW-0560">Oxidoreductase</keyword>
<keyword id="KW-0627">Porphyrin biosynthesis</keyword>
<comment type="function">
    <text evidence="1">Catalyzes the NADPH-dependent reduction of glutamyl-tRNA(Glu) to glutamate 1-semialdehyde (GSA).</text>
</comment>
<comment type="catalytic activity">
    <reaction evidence="1">
        <text>(S)-4-amino-5-oxopentanoate + tRNA(Glu) + NADP(+) = L-glutamyl-tRNA(Glu) + NADPH + H(+)</text>
        <dbReference type="Rhea" id="RHEA:12344"/>
        <dbReference type="Rhea" id="RHEA-COMP:9663"/>
        <dbReference type="Rhea" id="RHEA-COMP:9680"/>
        <dbReference type="ChEBI" id="CHEBI:15378"/>
        <dbReference type="ChEBI" id="CHEBI:57501"/>
        <dbReference type="ChEBI" id="CHEBI:57783"/>
        <dbReference type="ChEBI" id="CHEBI:58349"/>
        <dbReference type="ChEBI" id="CHEBI:78442"/>
        <dbReference type="ChEBI" id="CHEBI:78520"/>
        <dbReference type="EC" id="1.2.1.70"/>
    </reaction>
</comment>
<comment type="pathway">
    <text evidence="1">Porphyrin-containing compound metabolism; protoporphyrin-IX biosynthesis; 5-aminolevulinate from L-glutamyl-tRNA(Glu): step 1/2.</text>
</comment>
<comment type="subunit">
    <text evidence="1">Homodimer.</text>
</comment>
<comment type="domain">
    <text evidence="1">Possesses an unusual extended V-shaped dimeric structure with each monomer consisting of three distinct domains arranged along a curved 'spinal' alpha-helix. The N-terminal catalytic domain specifically recognizes the glutamate moiety of the substrate. The second domain is the NADPH-binding domain, and the third C-terminal domain is responsible for dimerization.</text>
</comment>
<comment type="miscellaneous">
    <text evidence="1">During catalysis, the active site Cys acts as a nucleophile attacking the alpha-carbonyl group of tRNA-bound glutamate with the formation of a thioester intermediate between enzyme and glutamate, and the concomitant release of tRNA(Glu). The thioester intermediate is finally reduced by direct hydride transfer from NADPH, to form the product GSA.</text>
</comment>
<comment type="similarity">
    <text evidence="1">Belongs to the glutamyl-tRNA reductase family.</text>
</comment>
<proteinExistence type="inferred from homology"/>
<sequence>MHILVVSVNYRTAPVEFREKLTFQAAELERAMTTLQNQKSVLENVIVSTCNRTEIYAVVDQLHTGRYYIKKFLADWFQLEIEEVAPYLTIFEQDGAIDHLFRVTCGLDSMVVGETQILGQIKDSFLEAQQVKATGTIFNELFKQVITLAKRAHSETTIGESAMSVSYAAVELGKKIFGELTDCHVLILGAGKMGELALQNLYGSGARKVTVMNRTLSKAEIMAEKYMGHAKPLSELQCALLEADILISSTGASDYVITKEMMTKVEKMRSGRPLFMVDIAVPRDIDPAIDELEGSFLYDIDDLQGVVEANRAERLKEAEKIQFMIEEEIVLFKTWLSTLGVVPLISALRDKALAIQSETMESLERKIPNLSDRERKVISKHTKSIINQLLKDPILVAKEIAAEEGADEKLALFAKIFDLEMEDVESRAEEVEHKRAWTPSVPSL</sequence>
<organism>
    <name type="scientific">Bacillus cereus (strain ZK / E33L)</name>
    <dbReference type="NCBI Taxonomy" id="288681"/>
    <lineage>
        <taxon>Bacteria</taxon>
        <taxon>Bacillati</taxon>
        <taxon>Bacillota</taxon>
        <taxon>Bacilli</taxon>
        <taxon>Bacillales</taxon>
        <taxon>Bacillaceae</taxon>
        <taxon>Bacillus</taxon>
        <taxon>Bacillus cereus group</taxon>
    </lineage>
</organism>
<evidence type="ECO:0000255" key="1">
    <source>
        <dbReference type="HAMAP-Rule" id="MF_00087"/>
    </source>
</evidence>
<accession>Q633X8</accession>
<protein>
    <recommendedName>
        <fullName evidence="1">Glutamyl-tRNA reductase</fullName>
        <shortName evidence="1">GluTR</shortName>
        <ecNumber evidence="1">1.2.1.70</ecNumber>
    </recommendedName>
</protein>
<dbReference type="EC" id="1.2.1.70" evidence="1"/>
<dbReference type="EMBL" id="CP000001">
    <property type="protein sequence ID" value="AAU16055.1"/>
    <property type="molecule type" value="Genomic_DNA"/>
</dbReference>
<dbReference type="RefSeq" id="WP_000547859.1">
    <property type="nucleotide sequence ID" value="NZ_CP009968.1"/>
</dbReference>
<dbReference type="SMR" id="Q633X8"/>
<dbReference type="KEGG" id="bcz:BCE33L4210"/>
<dbReference type="PATRIC" id="fig|288681.22.peg.1173"/>
<dbReference type="UniPathway" id="UPA00251">
    <property type="reaction ID" value="UER00316"/>
</dbReference>
<dbReference type="Proteomes" id="UP000002612">
    <property type="component" value="Chromosome"/>
</dbReference>
<dbReference type="GO" id="GO:0008883">
    <property type="term" value="F:glutamyl-tRNA reductase activity"/>
    <property type="evidence" value="ECO:0007669"/>
    <property type="project" value="UniProtKB-UniRule"/>
</dbReference>
<dbReference type="GO" id="GO:0050661">
    <property type="term" value="F:NADP binding"/>
    <property type="evidence" value="ECO:0007669"/>
    <property type="project" value="InterPro"/>
</dbReference>
<dbReference type="GO" id="GO:0006782">
    <property type="term" value="P:protoporphyrinogen IX biosynthetic process"/>
    <property type="evidence" value="ECO:0007669"/>
    <property type="project" value="UniProtKB-UniRule"/>
</dbReference>
<dbReference type="CDD" id="cd05213">
    <property type="entry name" value="NAD_bind_Glutamyl_tRNA_reduct"/>
    <property type="match status" value="1"/>
</dbReference>
<dbReference type="FunFam" id="3.30.460.30:FF:000001">
    <property type="entry name" value="Glutamyl-tRNA reductase"/>
    <property type="match status" value="1"/>
</dbReference>
<dbReference type="FunFam" id="3.40.50.720:FF:000031">
    <property type="entry name" value="Glutamyl-tRNA reductase"/>
    <property type="match status" value="1"/>
</dbReference>
<dbReference type="Gene3D" id="3.30.460.30">
    <property type="entry name" value="Glutamyl-tRNA reductase, N-terminal domain"/>
    <property type="match status" value="1"/>
</dbReference>
<dbReference type="Gene3D" id="3.40.50.720">
    <property type="entry name" value="NAD(P)-binding Rossmann-like Domain"/>
    <property type="match status" value="1"/>
</dbReference>
<dbReference type="HAMAP" id="MF_00087">
    <property type="entry name" value="Glu_tRNA_reductase"/>
    <property type="match status" value="1"/>
</dbReference>
<dbReference type="InterPro" id="IPR000343">
    <property type="entry name" value="4pyrrol_synth_GluRdtase"/>
</dbReference>
<dbReference type="InterPro" id="IPR015896">
    <property type="entry name" value="4pyrrol_synth_GluRdtase_dimer"/>
</dbReference>
<dbReference type="InterPro" id="IPR015895">
    <property type="entry name" value="4pyrrol_synth_GluRdtase_N"/>
</dbReference>
<dbReference type="InterPro" id="IPR018214">
    <property type="entry name" value="GluRdtase_CS"/>
</dbReference>
<dbReference type="InterPro" id="IPR036453">
    <property type="entry name" value="GluRdtase_dimer_dom_sf"/>
</dbReference>
<dbReference type="InterPro" id="IPR036343">
    <property type="entry name" value="GluRdtase_N_sf"/>
</dbReference>
<dbReference type="InterPro" id="IPR036291">
    <property type="entry name" value="NAD(P)-bd_dom_sf"/>
</dbReference>
<dbReference type="InterPro" id="IPR006151">
    <property type="entry name" value="Shikm_DH/Glu-tRNA_Rdtase"/>
</dbReference>
<dbReference type="NCBIfam" id="TIGR01035">
    <property type="entry name" value="hemA"/>
    <property type="match status" value="1"/>
</dbReference>
<dbReference type="PANTHER" id="PTHR43120">
    <property type="entry name" value="GLUTAMYL-TRNA REDUCTASE 1, CHLOROPLASTIC"/>
    <property type="match status" value="1"/>
</dbReference>
<dbReference type="PANTHER" id="PTHR43120:SF1">
    <property type="entry name" value="GLUTAMYL-TRNA REDUCTASE 1, CHLOROPLASTIC"/>
    <property type="match status" value="1"/>
</dbReference>
<dbReference type="Pfam" id="PF00745">
    <property type="entry name" value="GlutR_dimer"/>
    <property type="match status" value="1"/>
</dbReference>
<dbReference type="Pfam" id="PF05201">
    <property type="entry name" value="GlutR_N"/>
    <property type="match status" value="1"/>
</dbReference>
<dbReference type="Pfam" id="PF01488">
    <property type="entry name" value="Shikimate_DH"/>
    <property type="match status" value="1"/>
</dbReference>
<dbReference type="PIRSF" id="PIRSF000445">
    <property type="entry name" value="4pyrrol_synth_GluRdtase"/>
    <property type="match status" value="1"/>
</dbReference>
<dbReference type="SUPFAM" id="SSF69742">
    <property type="entry name" value="Glutamyl tRNA-reductase catalytic, N-terminal domain"/>
    <property type="match status" value="1"/>
</dbReference>
<dbReference type="SUPFAM" id="SSF69075">
    <property type="entry name" value="Glutamyl tRNA-reductase dimerization domain"/>
    <property type="match status" value="1"/>
</dbReference>
<dbReference type="SUPFAM" id="SSF51735">
    <property type="entry name" value="NAD(P)-binding Rossmann-fold domains"/>
    <property type="match status" value="1"/>
</dbReference>
<dbReference type="PROSITE" id="PS00747">
    <property type="entry name" value="GLUTR"/>
    <property type="match status" value="1"/>
</dbReference>
<feature type="chain" id="PRO_0000113991" description="Glutamyl-tRNA reductase">
    <location>
        <begin position="1"/>
        <end position="444"/>
    </location>
</feature>
<feature type="active site" description="Nucleophile" evidence="1">
    <location>
        <position position="50"/>
    </location>
</feature>
<feature type="binding site" evidence="1">
    <location>
        <begin position="49"/>
        <end position="52"/>
    </location>
    <ligand>
        <name>substrate</name>
    </ligand>
</feature>
<feature type="binding site" evidence="1">
    <location>
        <position position="109"/>
    </location>
    <ligand>
        <name>substrate</name>
    </ligand>
</feature>
<feature type="binding site" evidence="1">
    <location>
        <begin position="114"/>
        <end position="116"/>
    </location>
    <ligand>
        <name>substrate</name>
    </ligand>
</feature>
<feature type="binding site" evidence="1">
    <location>
        <position position="120"/>
    </location>
    <ligand>
        <name>substrate</name>
    </ligand>
</feature>
<feature type="binding site" evidence="1">
    <location>
        <begin position="189"/>
        <end position="194"/>
    </location>
    <ligand>
        <name>NADP(+)</name>
        <dbReference type="ChEBI" id="CHEBI:58349"/>
    </ligand>
</feature>
<feature type="site" description="Important for activity" evidence="1">
    <location>
        <position position="99"/>
    </location>
</feature>
<reference key="1">
    <citation type="journal article" date="2006" name="J. Bacteriol.">
        <title>Pathogenomic sequence analysis of Bacillus cereus and Bacillus thuringiensis isolates closely related to Bacillus anthracis.</title>
        <authorList>
            <person name="Han C.S."/>
            <person name="Xie G."/>
            <person name="Challacombe J.F."/>
            <person name="Altherr M.R."/>
            <person name="Bhotika S.S."/>
            <person name="Bruce D."/>
            <person name="Campbell C.S."/>
            <person name="Campbell M.L."/>
            <person name="Chen J."/>
            <person name="Chertkov O."/>
            <person name="Cleland C."/>
            <person name="Dimitrijevic M."/>
            <person name="Doggett N.A."/>
            <person name="Fawcett J.J."/>
            <person name="Glavina T."/>
            <person name="Goodwin L.A."/>
            <person name="Hill K.K."/>
            <person name="Hitchcock P."/>
            <person name="Jackson P.J."/>
            <person name="Keim P."/>
            <person name="Kewalramani A.R."/>
            <person name="Longmire J."/>
            <person name="Lucas S."/>
            <person name="Malfatti S."/>
            <person name="McMurry K."/>
            <person name="Meincke L.J."/>
            <person name="Misra M."/>
            <person name="Moseman B.L."/>
            <person name="Mundt M."/>
            <person name="Munk A.C."/>
            <person name="Okinaka R.T."/>
            <person name="Parson-Quintana B."/>
            <person name="Reilly L.P."/>
            <person name="Richardson P."/>
            <person name="Robinson D.L."/>
            <person name="Rubin E."/>
            <person name="Saunders E."/>
            <person name="Tapia R."/>
            <person name="Tesmer J.G."/>
            <person name="Thayer N."/>
            <person name="Thompson L.S."/>
            <person name="Tice H."/>
            <person name="Ticknor L.O."/>
            <person name="Wills P.L."/>
            <person name="Brettin T.S."/>
            <person name="Gilna P."/>
        </authorList>
    </citation>
    <scope>NUCLEOTIDE SEQUENCE [LARGE SCALE GENOMIC DNA]</scope>
    <source>
        <strain>ZK / E33L</strain>
    </source>
</reference>